<keyword id="KW-0539">Nucleus</keyword>
<keyword id="KW-1185">Reference proteome</keyword>
<keyword id="KW-0677">Repeat</keyword>
<keyword id="KW-0853">WD repeat</keyword>
<name>JIP5_COPC7</name>
<dbReference type="EMBL" id="AACS02000006">
    <property type="protein sequence ID" value="EAU84048.2"/>
    <property type="status" value="ALT_SEQ"/>
    <property type="molecule type" value="Genomic_DNA"/>
</dbReference>
<dbReference type="RefSeq" id="XP_001837704.2">
    <property type="nucleotide sequence ID" value="XM_001837652.2"/>
</dbReference>
<dbReference type="SMR" id="A8NZM5"/>
<dbReference type="FunCoup" id="A8NZM5">
    <property type="interactions" value="498"/>
</dbReference>
<dbReference type="STRING" id="240176.A8NZM5"/>
<dbReference type="GeneID" id="6014265"/>
<dbReference type="KEGG" id="cci:CC1G_06910"/>
<dbReference type="HOGENOM" id="CLU_035848_2_1_1"/>
<dbReference type="InParanoid" id="A8NZM5"/>
<dbReference type="OrthoDB" id="2288928at2759"/>
<dbReference type="Proteomes" id="UP000001861">
    <property type="component" value="Unassembled WGS sequence"/>
</dbReference>
<dbReference type="GO" id="GO:0005730">
    <property type="term" value="C:nucleolus"/>
    <property type="evidence" value="ECO:0007669"/>
    <property type="project" value="UniProtKB-SubCell"/>
</dbReference>
<dbReference type="Gene3D" id="2.130.10.10">
    <property type="entry name" value="YVTN repeat-like/Quinoprotein amine dehydrogenase"/>
    <property type="match status" value="2"/>
</dbReference>
<dbReference type="InterPro" id="IPR015943">
    <property type="entry name" value="WD40/YVTN_repeat-like_dom_sf"/>
</dbReference>
<dbReference type="InterPro" id="IPR036322">
    <property type="entry name" value="WD40_repeat_dom_sf"/>
</dbReference>
<dbReference type="InterPro" id="IPR001680">
    <property type="entry name" value="WD40_rpt"/>
</dbReference>
<dbReference type="InterPro" id="IPR050505">
    <property type="entry name" value="WDR55_POC1"/>
</dbReference>
<dbReference type="PANTHER" id="PTHR44019">
    <property type="entry name" value="WD REPEAT-CONTAINING PROTEIN 55"/>
    <property type="match status" value="1"/>
</dbReference>
<dbReference type="PANTHER" id="PTHR44019:SF20">
    <property type="entry name" value="WD REPEAT-CONTAINING PROTEIN 55"/>
    <property type="match status" value="1"/>
</dbReference>
<dbReference type="Pfam" id="PF24796">
    <property type="entry name" value="WDR55"/>
    <property type="match status" value="1"/>
</dbReference>
<dbReference type="SMART" id="SM00320">
    <property type="entry name" value="WD40"/>
    <property type="match status" value="5"/>
</dbReference>
<dbReference type="SUPFAM" id="SSF50978">
    <property type="entry name" value="WD40 repeat-like"/>
    <property type="match status" value="1"/>
</dbReference>
<dbReference type="PROSITE" id="PS50082">
    <property type="entry name" value="WD_REPEATS_2"/>
    <property type="match status" value="1"/>
</dbReference>
<dbReference type="PROSITE" id="PS50294">
    <property type="entry name" value="WD_REPEATS_REGION"/>
    <property type="match status" value="1"/>
</dbReference>
<organism>
    <name type="scientific">Coprinopsis cinerea (strain Okayama-7 / 130 / ATCC MYA-4618 / FGSC 9003)</name>
    <name type="common">Inky cap fungus</name>
    <name type="synonym">Hormographiella aspergillata</name>
    <dbReference type="NCBI Taxonomy" id="240176"/>
    <lineage>
        <taxon>Eukaryota</taxon>
        <taxon>Fungi</taxon>
        <taxon>Dikarya</taxon>
        <taxon>Basidiomycota</taxon>
        <taxon>Agaricomycotina</taxon>
        <taxon>Agaricomycetes</taxon>
        <taxon>Agaricomycetidae</taxon>
        <taxon>Agaricales</taxon>
        <taxon>Agaricineae</taxon>
        <taxon>Psathyrellaceae</taxon>
        <taxon>Coprinopsis</taxon>
    </lineage>
</organism>
<comment type="subcellular location">
    <subcellularLocation>
        <location evidence="1">Nucleus</location>
        <location evidence="1">Nucleolus</location>
    </subcellularLocation>
</comment>
<comment type="similarity">
    <text evidence="3">Belongs to the WD repeat WDR55 family.</text>
</comment>
<comment type="sequence caution" evidence="3">
    <conflict type="erroneous gene model prediction">
        <sequence resource="EMBL-CDS" id="EAU84048"/>
    </conflict>
</comment>
<accession>A8NZM5</accession>
<proteinExistence type="inferred from homology"/>
<protein>
    <recommendedName>
        <fullName>WD repeat-containing protein JIP5</fullName>
    </recommendedName>
</protein>
<evidence type="ECO:0000250" key="1"/>
<evidence type="ECO:0000256" key="2">
    <source>
        <dbReference type="SAM" id="MobiDB-lite"/>
    </source>
</evidence>
<evidence type="ECO:0000305" key="3"/>
<sequence length="408" mass="44451">MPEIPVGSQIFDVVFHPSSAIAYTGLLNGHIKAFAYGEQGDSHNLFSLRPSKRSCRGLSLNGDGSKLYAVGKSKALHIVDTTTTDIDARSAAHDCAINRVKSLMPWVVATGDDDGTVKLWDPRKRDSVKTYTQHFDYISDFLWLDDKKQLVATSGDGTLSVMDVRAKEPKVVAQSEDQEDDLLSIVAIKSAQKILVGTQLGILSVFNRKKGWGDCVDRIPGHPLSIDTLCNIPDDIPDTDPTSTVLTGSSDGFVRVVQILPTKFLGVVADHGEFPVERIAVGGGRYWVGSVGHDEVLRMTDLGAFFHENHVDSDEEEDDEEEWGGIEGADGSEGEEDEEGKAVEGSAEKGGGASSDESDDEDEEMEPQLGDQSSKRKRQPEVELPDPSRKSKKGKKETVIDKDFFDGL</sequence>
<feature type="chain" id="PRO_0000333556" description="WD repeat-containing protein JIP5">
    <location>
        <begin position="1"/>
        <end position="408"/>
    </location>
</feature>
<feature type="repeat" description="WD 1">
    <location>
        <begin position="5"/>
        <end position="44"/>
    </location>
</feature>
<feature type="repeat" description="WD 2">
    <location>
        <begin position="50"/>
        <end position="86"/>
    </location>
</feature>
<feature type="repeat" description="WD 3">
    <location>
        <begin position="87"/>
        <end position="130"/>
    </location>
</feature>
<feature type="repeat" description="WD 4">
    <location>
        <begin position="133"/>
        <end position="172"/>
    </location>
</feature>
<feature type="repeat" description="WD 5">
    <location>
        <begin position="177"/>
        <end position="216"/>
    </location>
</feature>
<feature type="repeat" description="WD 6">
    <location>
        <begin position="221"/>
        <end position="267"/>
    </location>
</feature>
<feature type="region of interest" description="Disordered" evidence="2">
    <location>
        <begin position="311"/>
        <end position="408"/>
    </location>
</feature>
<feature type="compositionally biased region" description="Acidic residues" evidence="2">
    <location>
        <begin position="313"/>
        <end position="339"/>
    </location>
</feature>
<feature type="compositionally biased region" description="Acidic residues" evidence="2">
    <location>
        <begin position="356"/>
        <end position="366"/>
    </location>
</feature>
<feature type="compositionally biased region" description="Basic and acidic residues" evidence="2">
    <location>
        <begin position="396"/>
        <end position="408"/>
    </location>
</feature>
<reference key="1">
    <citation type="journal article" date="2010" name="Proc. Natl. Acad. Sci. U.S.A.">
        <title>Insights into evolution of multicellular fungi from the assembled chromosomes of the mushroom Coprinopsis cinerea (Coprinus cinereus).</title>
        <authorList>
            <person name="Stajich J.E."/>
            <person name="Wilke S.K."/>
            <person name="Ahren D."/>
            <person name="Au C.H."/>
            <person name="Birren B.W."/>
            <person name="Borodovsky M."/>
            <person name="Burns C."/>
            <person name="Canbaeck B."/>
            <person name="Casselton L.A."/>
            <person name="Cheng C.K."/>
            <person name="Deng J."/>
            <person name="Dietrich F.S."/>
            <person name="Fargo D.C."/>
            <person name="Farman M.L."/>
            <person name="Gathman A.C."/>
            <person name="Goldberg J."/>
            <person name="Guigo R."/>
            <person name="Hoegger P.J."/>
            <person name="Hooker J.B."/>
            <person name="Huggins A."/>
            <person name="James T.Y."/>
            <person name="Kamada T."/>
            <person name="Kilaru S."/>
            <person name="Kodira C."/>
            <person name="Kuees U."/>
            <person name="Kupfer D."/>
            <person name="Kwan H.S."/>
            <person name="Lomsadze A."/>
            <person name="Li W."/>
            <person name="Lilly W.W."/>
            <person name="Ma L.-J."/>
            <person name="Mackey A.J."/>
            <person name="Manning G."/>
            <person name="Martin F."/>
            <person name="Muraguchi H."/>
            <person name="Natvig D.O."/>
            <person name="Palmerini H."/>
            <person name="Ramesh M.A."/>
            <person name="Rehmeyer C.J."/>
            <person name="Roe B.A."/>
            <person name="Shenoy N."/>
            <person name="Stanke M."/>
            <person name="Ter-Hovhannisyan V."/>
            <person name="Tunlid A."/>
            <person name="Velagapudi R."/>
            <person name="Vision T.J."/>
            <person name="Zeng Q."/>
            <person name="Zolan M.E."/>
            <person name="Pukkila P.J."/>
        </authorList>
    </citation>
    <scope>NUCLEOTIDE SEQUENCE [LARGE SCALE GENOMIC DNA]</scope>
    <source>
        <strain>Okayama-7 / 130 / ATCC MYA-4618 / FGSC 9003</strain>
    </source>
</reference>
<gene>
    <name type="primary">JIP5</name>
    <name type="ORF">CC1G_06910</name>
</gene>